<proteinExistence type="inferred from homology"/>
<organism>
    <name type="scientific">Neurospora crassa (strain ATCC 24698 / 74-OR23-1A / CBS 708.71 / DSM 1257 / FGSC 987)</name>
    <dbReference type="NCBI Taxonomy" id="367110"/>
    <lineage>
        <taxon>Eukaryota</taxon>
        <taxon>Fungi</taxon>
        <taxon>Dikarya</taxon>
        <taxon>Ascomycota</taxon>
        <taxon>Pezizomycotina</taxon>
        <taxon>Sordariomycetes</taxon>
        <taxon>Sordariomycetidae</taxon>
        <taxon>Sordariales</taxon>
        <taxon>Sordariaceae</taxon>
        <taxon>Neurospora</taxon>
    </lineage>
</organism>
<name>NU4LM_NEUCR</name>
<geneLocation type="mitochondrion"/>
<gene>
    <name type="primary">ndh-4L</name>
    <name type="synonym">ND4L</name>
    <name type="ORF">NCU16008</name>
</gene>
<dbReference type="EC" id="7.1.1.2"/>
<dbReference type="EMBL" id="X05115">
    <property type="protein sequence ID" value="CAB37186.1"/>
    <property type="molecule type" value="Genomic_DNA"/>
</dbReference>
<dbReference type="EMBL" id="KC683708">
    <property type="protein sequence ID" value="AGG15997.1"/>
    <property type="molecule type" value="Genomic_DNA"/>
</dbReference>
<dbReference type="PIR" id="S07320">
    <property type="entry name" value="S07320"/>
</dbReference>
<dbReference type="RefSeq" id="YP_009126709.1">
    <property type="nucleotide sequence ID" value="NC_026614.1"/>
</dbReference>
<dbReference type="SMR" id="P05509"/>
<dbReference type="STRING" id="367110.P05509"/>
<dbReference type="TCDB" id="3.D.1.6.2">
    <property type="family name" value="the h+ or na+-translocating nadh dehydrogenase (ndh) family"/>
</dbReference>
<dbReference type="EnsemblFungi" id="AGG15997">
    <property type="protein sequence ID" value="AGG15997"/>
    <property type="gene ID" value="NCU16008"/>
</dbReference>
<dbReference type="GeneID" id="23681561"/>
<dbReference type="KEGG" id="ncr:NCU16008"/>
<dbReference type="VEuPathDB" id="FungiDB:NCU16008"/>
<dbReference type="InParanoid" id="P05509"/>
<dbReference type="OrthoDB" id="2686308at2759"/>
<dbReference type="Proteomes" id="UP000001805">
    <property type="component" value="Mitochondrion"/>
</dbReference>
<dbReference type="GO" id="GO:0031966">
    <property type="term" value="C:mitochondrial membrane"/>
    <property type="evidence" value="ECO:0007669"/>
    <property type="project" value="UniProtKB-SubCell"/>
</dbReference>
<dbReference type="GO" id="GO:0045271">
    <property type="term" value="C:respiratory chain complex I"/>
    <property type="evidence" value="ECO:0000318"/>
    <property type="project" value="GO_Central"/>
</dbReference>
<dbReference type="GO" id="GO:0008137">
    <property type="term" value="F:NADH dehydrogenase (ubiquinone) activity"/>
    <property type="evidence" value="ECO:0007669"/>
    <property type="project" value="UniProtKB-EC"/>
</dbReference>
<dbReference type="GO" id="GO:0042773">
    <property type="term" value="P:ATP synthesis coupled electron transport"/>
    <property type="evidence" value="ECO:0007669"/>
    <property type="project" value="InterPro"/>
</dbReference>
<dbReference type="FunFam" id="1.10.287.3510:FF:000004">
    <property type="entry name" value="NADH-ubiquinone oxidoreductase chain 4L"/>
    <property type="match status" value="1"/>
</dbReference>
<dbReference type="Gene3D" id="1.10.287.3510">
    <property type="match status" value="1"/>
</dbReference>
<dbReference type="InterPro" id="IPR001133">
    <property type="entry name" value="NADH_UbQ_OxRdtase_chain4L/K"/>
</dbReference>
<dbReference type="InterPro" id="IPR039428">
    <property type="entry name" value="NUOK/Mnh_C1-like"/>
</dbReference>
<dbReference type="NCBIfam" id="NF004320">
    <property type="entry name" value="PRK05715.1-2"/>
    <property type="match status" value="1"/>
</dbReference>
<dbReference type="PANTHER" id="PTHR11434:SF16">
    <property type="entry name" value="NADH-UBIQUINONE OXIDOREDUCTASE CHAIN 4L"/>
    <property type="match status" value="1"/>
</dbReference>
<dbReference type="PANTHER" id="PTHR11434">
    <property type="entry name" value="NADH-UBIQUINONE OXIDOREDUCTASE SUBUNIT ND4L"/>
    <property type="match status" value="1"/>
</dbReference>
<dbReference type="Pfam" id="PF00420">
    <property type="entry name" value="Oxidored_q2"/>
    <property type="match status" value="1"/>
</dbReference>
<keyword id="KW-0249">Electron transport</keyword>
<keyword id="KW-0472">Membrane</keyword>
<keyword id="KW-0496">Mitochondrion</keyword>
<keyword id="KW-0520">NAD</keyword>
<keyword id="KW-1185">Reference proteome</keyword>
<keyword id="KW-0679">Respiratory chain</keyword>
<keyword id="KW-1278">Translocase</keyword>
<keyword id="KW-0812">Transmembrane</keyword>
<keyword id="KW-1133">Transmembrane helix</keyword>
<keyword id="KW-0813">Transport</keyword>
<keyword id="KW-0830">Ubiquinone</keyword>
<protein>
    <recommendedName>
        <fullName>NADH-ubiquinone oxidoreductase chain 4L</fullName>
        <ecNumber>7.1.1.2</ecNumber>
    </recommendedName>
    <alternativeName>
        <fullName>NADH dehydrogenase subunit 4L</fullName>
    </alternativeName>
</protein>
<sequence length="89" mass="9847">MNITLILFLIGILGFVLNRKNIILMLISIEIMLLAITFLILVSSLNMDDIIGQTYAIYIIVVAGAESAIGLAILVAFYRLRGSITIEYK</sequence>
<accession>P05509</accession>
<accession>M1R9R5</accession>
<comment type="function">
    <text>Core subunit of the mitochondrial membrane respiratory chain NADH dehydrogenase (Complex I) that is believed to belong to the minimal assembly required for catalysis. Complex I functions in the transfer of electrons from NADH to the respiratory chain. The immediate electron acceptor for the enzyme is believed to be ubiquinone.</text>
</comment>
<comment type="catalytic activity">
    <reaction>
        <text>a ubiquinone + NADH + 5 H(+)(in) = a ubiquinol + NAD(+) + 4 H(+)(out)</text>
        <dbReference type="Rhea" id="RHEA:29091"/>
        <dbReference type="Rhea" id="RHEA-COMP:9565"/>
        <dbReference type="Rhea" id="RHEA-COMP:9566"/>
        <dbReference type="ChEBI" id="CHEBI:15378"/>
        <dbReference type="ChEBI" id="CHEBI:16389"/>
        <dbReference type="ChEBI" id="CHEBI:17976"/>
        <dbReference type="ChEBI" id="CHEBI:57540"/>
        <dbReference type="ChEBI" id="CHEBI:57945"/>
        <dbReference type="EC" id="7.1.1.2"/>
    </reaction>
</comment>
<comment type="subcellular location">
    <subcellularLocation>
        <location evidence="1">Mitochondrion membrane</location>
        <topology evidence="1">Multi-pass membrane protein</topology>
    </subcellularLocation>
</comment>
<comment type="similarity">
    <text evidence="3">Belongs to the complex I subunit 4L family.</text>
</comment>
<evidence type="ECO:0000250" key="1"/>
<evidence type="ECO:0000255" key="2"/>
<evidence type="ECO:0000305" key="3"/>
<feature type="chain" id="PRO_0000118454" description="NADH-ubiquinone oxidoreductase chain 4L">
    <location>
        <begin position="1"/>
        <end position="89"/>
    </location>
</feature>
<feature type="transmembrane region" description="Helical" evidence="2">
    <location>
        <begin position="1"/>
        <end position="21"/>
    </location>
</feature>
<feature type="transmembrane region" description="Helical" evidence="2">
    <location>
        <begin position="22"/>
        <end position="42"/>
    </location>
</feature>
<feature type="transmembrane region" description="Helical" evidence="2">
    <location>
        <begin position="57"/>
        <end position="77"/>
    </location>
</feature>
<reference key="1">
    <citation type="journal article" date="1987" name="Mol. Gen. Genet.">
        <title>Structure and expression of the overlapping ND4L and ND5 genes of Neurospora crassa mitochondria.</title>
        <authorList>
            <person name="Nelson M.A."/>
            <person name="Macino G."/>
        </authorList>
    </citation>
    <scope>NUCLEOTIDE SEQUENCE [GENOMIC DNA]</scope>
    <source>
        <strain>ATCC 24698 / 74-OR23-1A / CBS 708.71 / DSM 1257 / FGSC 987</strain>
    </source>
</reference>
<reference key="2">
    <citation type="journal article" date="2003" name="Nature">
        <title>The genome sequence of the filamentous fungus Neurospora crassa.</title>
        <authorList>
            <person name="Galagan J.E."/>
            <person name="Calvo S.E."/>
            <person name="Borkovich K.A."/>
            <person name="Selker E.U."/>
            <person name="Read N.D."/>
            <person name="Jaffe D.B."/>
            <person name="FitzHugh W."/>
            <person name="Ma L.-J."/>
            <person name="Smirnov S."/>
            <person name="Purcell S."/>
            <person name="Rehman B."/>
            <person name="Elkins T."/>
            <person name="Engels R."/>
            <person name="Wang S."/>
            <person name="Nielsen C.B."/>
            <person name="Butler J."/>
            <person name="Endrizzi M."/>
            <person name="Qui D."/>
            <person name="Ianakiev P."/>
            <person name="Bell-Pedersen D."/>
            <person name="Nelson M.A."/>
            <person name="Werner-Washburne M."/>
            <person name="Selitrennikoff C.P."/>
            <person name="Kinsey J.A."/>
            <person name="Braun E.L."/>
            <person name="Zelter A."/>
            <person name="Schulte U."/>
            <person name="Kothe G.O."/>
            <person name="Jedd G."/>
            <person name="Mewes H.-W."/>
            <person name="Staben C."/>
            <person name="Marcotte E."/>
            <person name="Greenberg D."/>
            <person name="Roy A."/>
            <person name="Foley K."/>
            <person name="Naylor J."/>
            <person name="Stange-Thomann N."/>
            <person name="Barrett R."/>
            <person name="Gnerre S."/>
            <person name="Kamal M."/>
            <person name="Kamvysselis M."/>
            <person name="Mauceli E.W."/>
            <person name="Bielke C."/>
            <person name="Rudd S."/>
            <person name="Frishman D."/>
            <person name="Krystofova S."/>
            <person name="Rasmussen C."/>
            <person name="Metzenberg R.L."/>
            <person name="Perkins D.D."/>
            <person name="Kroken S."/>
            <person name="Cogoni C."/>
            <person name="Macino G."/>
            <person name="Catcheside D.E.A."/>
            <person name="Li W."/>
            <person name="Pratt R.J."/>
            <person name="Osmani S.A."/>
            <person name="DeSouza C.P.C."/>
            <person name="Glass N.L."/>
            <person name="Orbach M.J."/>
            <person name="Berglund J.A."/>
            <person name="Voelker R."/>
            <person name="Yarden O."/>
            <person name="Plamann M."/>
            <person name="Seiler S."/>
            <person name="Dunlap J.C."/>
            <person name="Radford A."/>
            <person name="Aramayo R."/>
            <person name="Natvig D.O."/>
            <person name="Alex L.A."/>
            <person name="Mannhaupt G."/>
            <person name="Ebbole D.J."/>
            <person name="Freitag M."/>
            <person name="Paulsen I."/>
            <person name="Sachs M.S."/>
            <person name="Lander E.S."/>
            <person name="Nusbaum C."/>
            <person name="Birren B.W."/>
        </authorList>
    </citation>
    <scope>NUCLEOTIDE SEQUENCE [LARGE SCALE GENOMIC DNA]</scope>
    <source>
        <strain>ATCC 24698 / 74-OR23-1A / CBS 708.71 / DSM 1257 / FGSC 987</strain>
    </source>
</reference>
<reference key="3">
    <citation type="book" date="2004" name="The Mycota II, Genetics and Biotechnology (2nd edition)">
        <title>Mitochondrial genetics of Neurospora.</title>
        <editorList>
            <person name="Kueck U."/>
        </editorList>
        <authorList>
            <person name="Kennell J.C."/>
            <person name="Collins R.A."/>
            <person name="Griffiths A.J.F."/>
            <person name="Nargang F.E."/>
        </authorList>
    </citation>
    <scope>GENOME REANNOTATION</scope>
    <source>
        <strain>ATCC 24698 / 74-OR23-1A / CBS 708.71 / DSM 1257 / FGSC 987</strain>
    </source>
</reference>